<gene>
    <name evidence="1" type="primary">rpmG1</name>
    <name type="ordered locus">BCG_0683</name>
</gene>
<reference key="1">
    <citation type="journal article" date="2007" name="Proc. Natl. Acad. Sci. U.S.A.">
        <title>Genome plasticity of BCG and impact on vaccine efficacy.</title>
        <authorList>
            <person name="Brosch R."/>
            <person name="Gordon S.V."/>
            <person name="Garnier T."/>
            <person name="Eiglmeier K."/>
            <person name="Frigui W."/>
            <person name="Valenti P."/>
            <person name="Dos Santos S."/>
            <person name="Duthoy S."/>
            <person name="Lacroix C."/>
            <person name="Garcia-Pelayo C."/>
            <person name="Inwald J.K."/>
            <person name="Golby P."/>
            <person name="Garcia J.N."/>
            <person name="Hewinson R.G."/>
            <person name="Behr M.A."/>
            <person name="Quail M.A."/>
            <person name="Churcher C."/>
            <person name="Barrell B.G."/>
            <person name="Parkhill J."/>
            <person name="Cole S.T."/>
        </authorList>
    </citation>
    <scope>NUCLEOTIDE SEQUENCE [LARGE SCALE GENOMIC DNA]</scope>
    <source>
        <strain>BCG / Pasteur 1173P2</strain>
    </source>
</reference>
<comment type="similarity">
    <text evidence="1">Belongs to the bacterial ribosomal protein bL33 family.</text>
</comment>
<evidence type="ECO:0000255" key="1">
    <source>
        <dbReference type="HAMAP-Rule" id="MF_00294"/>
    </source>
</evidence>
<proteinExistence type="inferred from homology"/>
<feature type="chain" id="PRO_0000356548" description="Large ribosomal subunit protein bL33A">
    <location>
        <begin position="1"/>
        <end position="55"/>
    </location>
</feature>
<keyword id="KW-0687">Ribonucleoprotein</keyword>
<keyword id="KW-0689">Ribosomal protein</keyword>
<sequence>MASSTDVRPKITLACEVCKHRNYITKKNRRNDPDRLELKKFCPNCGKHQAHRETR</sequence>
<protein>
    <recommendedName>
        <fullName evidence="1">Large ribosomal subunit protein bL33A</fullName>
    </recommendedName>
    <alternativeName>
        <fullName evidence="1">50S ribosomal protein L33 1</fullName>
    </alternativeName>
</protein>
<dbReference type="EMBL" id="AM408590">
    <property type="protein sequence ID" value="CAL70669.1"/>
    <property type="molecule type" value="Genomic_DNA"/>
</dbReference>
<dbReference type="SMR" id="A1KGB4"/>
<dbReference type="KEGG" id="mbb:BCG_0683"/>
<dbReference type="HOGENOM" id="CLU_190949_0_2_11"/>
<dbReference type="Proteomes" id="UP000001472">
    <property type="component" value="Chromosome"/>
</dbReference>
<dbReference type="GO" id="GO:0005737">
    <property type="term" value="C:cytoplasm"/>
    <property type="evidence" value="ECO:0007669"/>
    <property type="project" value="UniProtKB-ARBA"/>
</dbReference>
<dbReference type="GO" id="GO:1990904">
    <property type="term" value="C:ribonucleoprotein complex"/>
    <property type="evidence" value="ECO:0007669"/>
    <property type="project" value="UniProtKB-KW"/>
</dbReference>
<dbReference type="GO" id="GO:0005840">
    <property type="term" value="C:ribosome"/>
    <property type="evidence" value="ECO:0007669"/>
    <property type="project" value="UniProtKB-KW"/>
</dbReference>
<dbReference type="GO" id="GO:0003735">
    <property type="term" value="F:structural constituent of ribosome"/>
    <property type="evidence" value="ECO:0007669"/>
    <property type="project" value="InterPro"/>
</dbReference>
<dbReference type="GO" id="GO:0006412">
    <property type="term" value="P:translation"/>
    <property type="evidence" value="ECO:0007669"/>
    <property type="project" value="UniProtKB-UniRule"/>
</dbReference>
<dbReference type="Gene3D" id="2.20.28.120">
    <property type="entry name" value="Ribosomal protein L33"/>
    <property type="match status" value="1"/>
</dbReference>
<dbReference type="HAMAP" id="MF_00294">
    <property type="entry name" value="Ribosomal_bL33"/>
    <property type="match status" value="1"/>
</dbReference>
<dbReference type="InterPro" id="IPR001705">
    <property type="entry name" value="Ribosomal_bL33"/>
</dbReference>
<dbReference type="InterPro" id="IPR018264">
    <property type="entry name" value="Ribosomal_bL33_CS"/>
</dbReference>
<dbReference type="InterPro" id="IPR038584">
    <property type="entry name" value="Ribosomal_bL33_sf"/>
</dbReference>
<dbReference type="InterPro" id="IPR011332">
    <property type="entry name" value="Ribosomal_zn-bd"/>
</dbReference>
<dbReference type="NCBIfam" id="NF001764">
    <property type="entry name" value="PRK00504.1"/>
    <property type="match status" value="1"/>
</dbReference>
<dbReference type="NCBIfam" id="NF001860">
    <property type="entry name" value="PRK00595.1"/>
    <property type="match status" value="1"/>
</dbReference>
<dbReference type="NCBIfam" id="TIGR01023">
    <property type="entry name" value="rpmG_bact"/>
    <property type="match status" value="1"/>
</dbReference>
<dbReference type="PANTHER" id="PTHR43168">
    <property type="entry name" value="50S RIBOSOMAL PROTEIN L33, CHLOROPLASTIC"/>
    <property type="match status" value="1"/>
</dbReference>
<dbReference type="PANTHER" id="PTHR43168:SF2">
    <property type="entry name" value="LARGE RIBOSOMAL SUBUNIT PROTEIN BL33C"/>
    <property type="match status" value="1"/>
</dbReference>
<dbReference type="Pfam" id="PF00471">
    <property type="entry name" value="Ribosomal_L33"/>
    <property type="match status" value="1"/>
</dbReference>
<dbReference type="SUPFAM" id="SSF57829">
    <property type="entry name" value="Zn-binding ribosomal proteins"/>
    <property type="match status" value="1"/>
</dbReference>
<dbReference type="PROSITE" id="PS00582">
    <property type="entry name" value="RIBOSOMAL_L33"/>
    <property type="match status" value="1"/>
</dbReference>
<accession>A1KGB4</accession>
<name>RL331_MYCBP</name>
<organism>
    <name type="scientific">Mycobacterium bovis (strain BCG / Pasteur 1173P2)</name>
    <dbReference type="NCBI Taxonomy" id="410289"/>
    <lineage>
        <taxon>Bacteria</taxon>
        <taxon>Bacillati</taxon>
        <taxon>Actinomycetota</taxon>
        <taxon>Actinomycetes</taxon>
        <taxon>Mycobacteriales</taxon>
        <taxon>Mycobacteriaceae</taxon>
        <taxon>Mycobacterium</taxon>
        <taxon>Mycobacterium tuberculosis complex</taxon>
    </lineage>
</organism>